<sequence>MDSTGTGAGGKGKKGAAGRKVGGPRKKSVSRSVKAGLQFPVGRIGRYLKKGRYAQXVGTGAPVYLAAVLEYLAAEVLELAGNAARDNKKTRIIPRHVLLAIRNDEELGKLLGGVTIAHGGVLPNINPVLLPKKTAEKASSGGSKEAKSPKKAAKSPKKA</sequence>
<protein>
    <recommendedName>
        <fullName>Histone H2A</fullName>
    </recommendedName>
</protein>
<evidence type="ECO:0000256" key="1">
    <source>
        <dbReference type="SAM" id="MobiDB-lite"/>
    </source>
</evidence>
<evidence type="ECO:0000305" key="2"/>
<feature type="chain" id="PRO_0000055250" description="Histone H2A">
    <location>
        <begin position="1"/>
        <end position="159"/>
    </location>
</feature>
<feature type="region of interest" description="Disordered" evidence="1">
    <location>
        <begin position="1"/>
        <end position="31"/>
    </location>
</feature>
<feature type="region of interest" description="Disordered" evidence="1">
    <location>
        <begin position="133"/>
        <end position="159"/>
    </location>
</feature>
<feature type="short sequence motif" description="SPKK motif 1">
    <location>
        <begin position="148"/>
        <end position="151"/>
    </location>
</feature>
<feature type="short sequence motif" description="SPKK motif 2">
    <location>
        <begin position="155"/>
        <end position="158"/>
    </location>
</feature>
<feature type="compositionally biased region" description="Gly residues" evidence="1">
    <location>
        <begin position="1"/>
        <end position="10"/>
    </location>
</feature>
<feature type="compositionally biased region" description="Basic residues" evidence="1">
    <location>
        <begin position="11"/>
        <end position="29"/>
    </location>
</feature>
<feature type="compositionally biased region" description="Basic residues" evidence="1">
    <location>
        <begin position="149"/>
        <end position="159"/>
    </location>
</feature>
<name>H2A_MAIZE</name>
<reference key="1">
    <citation type="journal article" date="1994" name="Maydica">
        <title>Characterization of histone H2A and H2B cDNA clones isolated from a maize ovule cDNA library.</title>
        <authorList>
            <person name="Bokhari-Riza A."/>
            <person name="Turcich M.P."/>
            <person name="Takacs I."/>
            <person name="Hamilton D.A."/>
            <person name="Mascarenhas J.P."/>
        </authorList>
    </citation>
    <scope>NUCLEOTIDE SEQUENCE [MRNA]</scope>
    <source>
        <strain>cv. Wisconsin 22</strain>
        <tissue>Ovule</tissue>
    </source>
</reference>
<organism>
    <name type="scientific">Zea mays</name>
    <name type="common">Maize</name>
    <dbReference type="NCBI Taxonomy" id="4577"/>
    <lineage>
        <taxon>Eukaryota</taxon>
        <taxon>Viridiplantae</taxon>
        <taxon>Streptophyta</taxon>
        <taxon>Embryophyta</taxon>
        <taxon>Tracheophyta</taxon>
        <taxon>Spermatophyta</taxon>
        <taxon>Magnoliopsida</taxon>
        <taxon>Liliopsida</taxon>
        <taxon>Poales</taxon>
        <taxon>Poaceae</taxon>
        <taxon>PACMAD clade</taxon>
        <taxon>Panicoideae</taxon>
        <taxon>Andropogonodae</taxon>
        <taxon>Andropogoneae</taxon>
        <taxon>Tripsacinae</taxon>
        <taxon>Zea</taxon>
    </lineage>
</organism>
<dbReference type="EMBL" id="U08225">
    <property type="protein sequence ID" value="AAB04687.1"/>
    <property type="molecule type" value="mRNA"/>
</dbReference>
<dbReference type="PIR" id="T02076">
    <property type="entry name" value="T02076"/>
</dbReference>
<dbReference type="STRING" id="4577.P40280"/>
<dbReference type="PaxDb" id="4577-GRMZM2G047813_P01"/>
<dbReference type="MaizeGDB" id="77944"/>
<dbReference type="eggNOG" id="KOG1756">
    <property type="taxonomic scope" value="Eukaryota"/>
</dbReference>
<dbReference type="InParanoid" id="P40280"/>
<dbReference type="Proteomes" id="UP000007305">
    <property type="component" value="Unplaced"/>
</dbReference>
<dbReference type="ExpressionAtlas" id="P40280">
    <property type="expression patterns" value="baseline and differential"/>
</dbReference>
<dbReference type="GO" id="GO:0000786">
    <property type="term" value="C:nucleosome"/>
    <property type="evidence" value="ECO:0000318"/>
    <property type="project" value="GO_Central"/>
</dbReference>
<dbReference type="GO" id="GO:0005634">
    <property type="term" value="C:nucleus"/>
    <property type="evidence" value="ECO:0000318"/>
    <property type="project" value="GO_Central"/>
</dbReference>
<dbReference type="GO" id="GO:0003677">
    <property type="term" value="F:DNA binding"/>
    <property type="evidence" value="ECO:0007669"/>
    <property type="project" value="UniProtKB-KW"/>
</dbReference>
<dbReference type="GO" id="GO:0046982">
    <property type="term" value="F:protein heterodimerization activity"/>
    <property type="evidence" value="ECO:0007669"/>
    <property type="project" value="InterPro"/>
</dbReference>
<dbReference type="GO" id="GO:0030527">
    <property type="term" value="F:structural constituent of chromatin"/>
    <property type="evidence" value="ECO:0000318"/>
    <property type="project" value="GO_Central"/>
</dbReference>
<dbReference type="GO" id="GO:0031507">
    <property type="term" value="P:heterochromatin formation"/>
    <property type="evidence" value="ECO:0000318"/>
    <property type="project" value="GO_Central"/>
</dbReference>
<dbReference type="CDD" id="cd00074">
    <property type="entry name" value="HFD_H2A"/>
    <property type="match status" value="1"/>
</dbReference>
<dbReference type="FunFam" id="1.10.20.10:FF:000026">
    <property type="entry name" value="Histone H2A"/>
    <property type="match status" value="1"/>
</dbReference>
<dbReference type="Gene3D" id="1.10.20.10">
    <property type="entry name" value="Histone, subunit A"/>
    <property type="match status" value="1"/>
</dbReference>
<dbReference type="InterPro" id="IPR009072">
    <property type="entry name" value="Histone-fold"/>
</dbReference>
<dbReference type="InterPro" id="IPR002119">
    <property type="entry name" value="Histone_H2A"/>
</dbReference>
<dbReference type="InterPro" id="IPR007125">
    <property type="entry name" value="Histone_H2A/H2B/H3"/>
</dbReference>
<dbReference type="InterPro" id="IPR032454">
    <property type="entry name" value="Histone_H2A_C"/>
</dbReference>
<dbReference type="InterPro" id="IPR032458">
    <property type="entry name" value="Histone_H2A_CS"/>
</dbReference>
<dbReference type="PANTHER" id="PTHR23430">
    <property type="entry name" value="HISTONE H2A"/>
    <property type="match status" value="1"/>
</dbReference>
<dbReference type="Pfam" id="PF00125">
    <property type="entry name" value="Histone"/>
    <property type="match status" value="1"/>
</dbReference>
<dbReference type="Pfam" id="PF16211">
    <property type="entry name" value="Histone_H2A_C"/>
    <property type="match status" value="1"/>
</dbReference>
<dbReference type="PRINTS" id="PR00620">
    <property type="entry name" value="HISTONEH2A"/>
</dbReference>
<dbReference type="SMART" id="SM00414">
    <property type="entry name" value="H2A"/>
    <property type="match status" value="1"/>
</dbReference>
<dbReference type="SUPFAM" id="SSF47113">
    <property type="entry name" value="Histone-fold"/>
    <property type="match status" value="1"/>
</dbReference>
<dbReference type="PROSITE" id="PS00046">
    <property type="entry name" value="HISTONE_H2A"/>
    <property type="match status" value="1"/>
</dbReference>
<comment type="function">
    <text>Core component of nucleosome. Nucleosomes wrap and compact DNA into chromatin, limiting DNA accessibility to the cellular machineries which require DNA as a template. Histones thereby play a central role in transcription regulation, DNA repair, DNA replication and chromosomal stability. DNA accessibility is regulated via a complex set of post-translational modifications of histones, also called histone code, and nucleosome remodeling.</text>
</comment>
<comment type="subunit">
    <text>The nucleosome is a histone octamer containing two molecules each of H2A, H2B, H3 and H4 assembled in one H3-H4 heterotetramer and two H2A-H2B heterodimers. The octamer wraps approximately 147 bp of DNA.</text>
</comment>
<comment type="subcellular location">
    <subcellularLocation>
        <location>Nucleus</location>
    </subcellularLocation>
    <subcellularLocation>
        <location>Chromosome</location>
    </subcellularLocation>
</comment>
<comment type="domain">
    <text>Contains 2 SPKK motifs which may interact with the minor groove of A/T-rich DNA sites. Phosphorylation of this motif may regulate DNA binding. This motif is reiterated in both termini of histone H1 and in the N-terminus of sea urchin histones H2B, but its presence in the C-terminus seems to be unique to plant H2A.</text>
</comment>
<comment type="similarity">
    <text evidence="2">Belongs to the histone H2A family.</text>
</comment>
<keyword id="KW-0158">Chromosome</keyword>
<keyword id="KW-0238">DNA-binding</keyword>
<keyword id="KW-0544">Nucleosome core</keyword>
<keyword id="KW-0539">Nucleus</keyword>
<keyword id="KW-1185">Reference proteome</keyword>
<accession>P40280</accession>
<proteinExistence type="evidence at transcript level"/>